<comment type="function">
    <text evidence="1">This protein is involved in the repair of mismatches in DNA. It is required for dam-dependent methyl-directed DNA mismatch repair. May act as a 'molecular matchmaker', a protein that promotes the formation of a stable complex between two or more DNA-binding proteins in an ATP-dependent manner without itself being part of a final effector complex.</text>
</comment>
<comment type="similarity">
    <text evidence="1">Belongs to the DNA mismatch repair MutL/HexB family.</text>
</comment>
<name>MUTL_AKKM8</name>
<accession>B2ULE2</accession>
<organism>
    <name type="scientific">Akkermansia muciniphila (strain ATCC BAA-835 / DSM 22959 / JCM 33894 / BCRC 81048 / CCUG 64013 / CIP 107961 / Muc)</name>
    <dbReference type="NCBI Taxonomy" id="349741"/>
    <lineage>
        <taxon>Bacteria</taxon>
        <taxon>Pseudomonadati</taxon>
        <taxon>Verrucomicrobiota</taxon>
        <taxon>Verrucomicrobiia</taxon>
        <taxon>Verrucomicrobiales</taxon>
        <taxon>Akkermansiaceae</taxon>
        <taxon>Akkermansia</taxon>
    </lineage>
</organism>
<gene>
    <name evidence="1" type="primary">mutL</name>
    <name type="ordered locus">Amuc_0086</name>
</gene>
<sequence length="633" mass="69554">MPSIHVMSPTLASQVAAGEVVERPASVVKELVENSLDAGAKFVRVEIRRGGVGMIKVTDDGSGMSRADAELCTKRHATSKLSSLEELFEITHLGFRGEALPSIASVSRFKLCTRQQQDLEGWEIRIDGGLEHEPRSSGVSPGTAIEVADLFYNTPARRKFLKSAETEASHVEHQIRLHALAYPQVRFAYKRDDQLVFDLPATADLRVRISALTDAATAAALIPIETTIGPGISITGFLLPLSEARRTRKGQYVFMNTRPVEDQLINRAIRDGYGGFPTGLHPALFLYMEVEPALVDVNVHPAKKEVRFRRSADVVNTIVEAIANTLQKHARQEIHAAAAPEPERTLPPAHSTTAPYGEIPARSTNPGSAFPAAARPAPASSAAQPPLSSSAKQSHGAVPPPTLRAIPLKQVPATQGKLDFHRQEDEETARNAHENAALERDASAGFSYLGTLRQQFALFETPEGLVLMHPKAARERIIFERLRARREAPMPSQQLLDPVVLDLDPRDFAVIRQFAPHFDQAGMAVTPFGQNTIRIESIPALLELENARAFLLELVDRLTQSEFSRNAKRVAYETFIGEFARKSAWRERISPHRAPAILKDLLACEVPYCTPGGKPTLVNYSVPEIKRKFGLQA</sequence>
<feature type="chain" id="PRO_1000096623" description="DNA mismatch repair protein MutL">
    <location>
        <begin position="1"/>
        <end position="633"/>
    </location>
</feature>
<feature type="region of interest" description="Disordered" evidence="2">
    <location>
        <begin position="338"/>
        <end position="407"/>
    </location>
</feature>
<feature type="compositionally biased region" description="Low complexity" evidence="2">
    <location>
        <begin position="366"/>
        <end position="391"/>
    </location>
</feature>
<dbReference type="EMBL" id="CP001071">
    <property type="protein sequence ID" value="ACD03931.1"/>
    <property type="molecule type" value="Genomic_DNA"/>
</dbReference>
<dbReference type="RefSeq" id="WP_012419146.1">
    <property type="nucleotide sequence ID" value="NC_010655.1"/>
</dbReference>
<dbReference type="SMR" id="B2ULE2"/>
<dbReference type="STRING" id="349741.Amuc_0086"/>
<dbReference type="PaxDb" id="349741-Amuc_0086"/>
<dbReference type="KEGG" id="amu:Amuc_0086"/>
<dbReference type="eggNOG" id="COG0323">
    <property type="taxonomic scope" value="Bacteria"/>
</dbReference>
<dbReference type="HOGENOM" id="CLU_004131_4_2_0"/>
<dbReference type="OrthoDB" id="9763467at2"/>
<dbReference type="BioCyc" id="AMUC349741:G1GBX-106-MONOMER"/>
<dbReference type="Proteomes" id="UP000001031">
    <property type="component" value="Chromosome"/>
</dbReference>
<dbReference type="GO" id="GO:0032300">
    <property type="term" value="C:mismatch repair complex"/>
    <property type="evidence" value="ECO:0007669"/>
    <property type="project" value="InterPro"/>
</dbReference>
<dbReference type="GO" id="GO:0005524">
    <property type="term" value="F:ATP binding"/>
    <property type="evidence" value="ECO:0007669"/>
    <property type="project" value="InterPro"/>
</dbReference>
<dbReference type="GO" id="GO:0016887">
    <property type="term" value="F:ATP hydrolysis activity"/>
    <property type="evidence" value="ECO:0007669"/>
    <property type="project" value="InterPro"/>
</dbReference>
<dbReference type="GO" id="GO:0140664">
    <property type="term" value="F:ATP-dependent DNA damage sensor activity"/>
    <property type="evidence" value="ECO:0007669"/>
    <property type="project" value="InterPro"/>
</dbReference>
<dbReference type="GO" id="GO:0030983">
    <property type="term" value="F:mismatched DNA binding"/>
    <property type="evidence" value="ECO:0007669"/>
    <property type="project" value="InterPro"/>
</dbReference>
<dbReference type="GO" id="GO:0006298">
    <property type="term" value="P:mismatch repair"/>
    <property type="evidence" value="ECO:0007669"/>
    <property type="project" value="UniProtKB-UniRule"/>
</dbReference>
<dbReference type="CDD" id="cd16926">
    <property type="entry name" value="HATPase_MutL-MLH-PMS-like"/>
    <property type="match status" value="1"/>
</dbReference>
<dbReference type="CDD" id="cd00782">
    <property type="entry name" value="MutL_Trans"/>
    <property type="match status" value="1"/>
</dbReference>
<dbReference type="FunFam" id="3.30.565.10:FF:000003">
    <property type="entry name" value="DNA mismatch repair endonuclease MutL"/>
    <property type="match status" value="1"/>
</dbReference>
<dbReference type="Gene3D" id="3.30.230.10">
    <property type="match status" value="1"/>
</dbReference>
<dbReference type="Gene3D" id="3.30.565.10">
    <property type="entry name" value="Histidine kinase-like ATPase, C-terminal domain"/>
    <property type="match status" value="1"/>
</dbReference>
<dbReference type="Gene3D" id="3.30.1540.20">
    <property type="entry name" value="MutL, C-terminal domain, dimerisation subdomain"/>
    <property type="match status" value="1"/>
</dbReference>
<dbReference type="Gene3D" id="3.30.1370.100">
    <property type="entry name" value="MutL, C-terminal domain, regulatory subdomain"/>
    <property type="match status" value="1"/>
</dbReference>
<dbReference type="HAMAP" id="MF_00149">
    <property type="entry name" value="DNA_mis_repair"/>
    <property type="match status" value="1"/>
</dbReference>
<dbReference type="InterPro" id="IPR014762">
    <property type="entry name" value="DNA_mismatch_repair_CS"/>
</dbReference>
<dbReference type="InterPro" id="IPR020667">
    <property type="entry name" value="DNA_mismatch_repair_MutL"/>
</dbReference>
<dbReference type="InterPro" id="IPR013507">
    <property type="entry name" value="DNA_mismatch_S5_2-like"/>
</dbReference>
<dbReference type="InterPro" id="IPR036890">
    <property type="entry name" value="HATPase_C_sf"/>
</dbReference>
<dbReference type="InterPro" id="IPR002099">
    <property type="entry name" value="MutL/Mlh/PMS"/>
</dbReference>
<dbReference type="InterPro" id="IPR038973">
    <property type="entry name" value="MutL/Mlh/Pms-like"/>
</dbReference>
<dbReference type="InterPro" id="IPR014790">
    <property type="entry name" value="MutL_C"/>
</dbReference>
<dbReference type="InterPro" id="IPR042120">
    <property type="entry name" value="MutL_C_dimsub"/>
</dbReference>
<dbReference type="InterPro" id="IPR042121">
    <property type="entry name" value="MutL_C_regsub"/>
</dbReference>
<dbReference type="InterPro" id="IPR037198">
    <property type="entry name" value="MutL_C_sf"/>
</dbReference>
<dbReference type="InterPro" id="IPR020568">
    <property type="entry name" value="Ribosomal_Su5_D2-typ_SF"/>
</dbReference>
<dbReference type="InterPro" id="IPR014721">
    <property type="entry name" value="Ribsml_uS5_D2-typ_fold_subgr"/>
</dbReference>
<dbReference type="NCBIfam" id="TIGR00585">
    <property type="entry name" value="mutl"/>
    <property type="match status" value="1"/>
</dbReference>
<dbReference type="PANTHER" id="PTHR10073">
    <property type="entry name" value="DNA MISMATCH REPAIR PROTEIN MLH, PMS, MUTL"/>
    <property type="match status" value="1"/>
</dbReference>
<dbReference type="PANTHER" id="PTHR10073:SF12">
    <property type="entry name" value="DNA MISMATCH REPAIR PROTEIN MLH1"/>
    <property type="match status" value="1"/>
</dbReference>
<dbReference type="Pfam" id="PF01119">
    <property type="entry name" value="DNA_mis_repair"/>
    <property type="match status" value="1"/>
</dbReference>
<dbReference type="Pfam" id="PF13589">
    <property type="entry name" value="HATPase_c_3"/>
    <property type="match status" value="1"/>
</dbReference>
<dbReference type="Pfam" id="PF08676">
    <property type="entry name" value="MutL_C"/>
    <property type="match status" value="1"/>
</dbReference>
<dbReference type="SMART" id="SM01340">
    <property type="entry name" value="DNA_mis_repair"/>
    <property type="match status" value="1"/>
</dbReference>
<dbReference type="SMART" id="SM00853">
    <property type="entry name" value="MutL_C"/>
    <property type="match status" value="1"/>
</dbReference>
<dbReference type="SUPFAM" id="SSF55874">
    <property type="entry name" value="ATPase domain of HSP90 chaperone/DNA topoisomerase II/histidine kinase"/>
    <property type="match status" value="1"/>
</dbReference>
<dbReference type="SUPFAM" id="SSF118116">
    <property type="entry name" value="DNA mismatch repair protein MutL"/>
    <property type="match status" value="1"/>
</dbReference>
<dbReference type="SUPFAM" id="SSF54211">
    <property type="entry name" value="Ribosomal protein S5 domain 2-like"/>
    <property type="match status" value="1"/>
</dbReference>
<dbReference type="PROSITE" id="PS00058">
    <property type="entry name" value="DNA_MISMATCH_REPAIR_1"/>
    <property type="match status" value="1"/>
</dbReference>
<proteinExistence type="inferred from homology"/>
<protein>
    <recommendedName>
        <fullName evidence="1">DNA mismatch repair protein MutL</fullName>
    </recommendedName>
</protein>
<reference key="1">
    <citation type="journal article" date="2011" name="PLoS ONE">
        <title>The genome of Akkermansia muciniphila, a dedicated intestinal mucin degrader, and its use in exploring intestinal metagenomes.</title>
        <authorList>
            <person name="van Passel M.W."/>
            <person name="Kant R."/>
            <person name="Zoetendal E.G."/>
            <person name="Plugge C.M."/>
            <person name="Derrien M."/>
            <person name="Malfatti S.A."/>
            <person name="Chain P.S."/>
            <person name="Woyke T."/>
            <person name="Palva A."/>
            <person name="de Vos W.M."/>
            <person name="Smidt H."/>
        </authorList>
    </citation>
    <scope>NUCLEOTIDE SEQUENCE [LARGE SCALE GENOMIC DNA]</scope>
    <source>
        <strain>ATCC BAA-835 / DSM 22959 / JCM 33894 / BCRC 81048 / CCUG 64013 / CIP 107961 / Muc</strain>
    </source>
</reference>
<evidence type="ECO:0000255" key="1">
    <source>
        <dbReference type="HAMAP-Rule" id="MF_00149"/>
    </source>
</evidence>
<evidence type="ECO:0000256" key="2">
    <source>
        <dbReference type="SAM" id="MobiDB-lite"/>
    </source>
</evidence>
<keyword id="KW-0227">DNA damage</keyword>
<keyword id="KW-0234">DNA repair</keyword>
<keyword id="KW-1185">Reference proteome</keyword>